<sequence>MSVVPPNRSQTGWPRGVNQFGNKYIQQTKPLTLERTINLYPLTNYTFGTKEPLYEKDSSVAARFQRMREEFDKIGMRRTVEGVLIVHEHRLPHVLLLQLGTTFFKLPGGELNPGEDEVEGLKRLMTEILGRQDGVLQDWVIDDCIGNWWRPNFEPPQYPYIPAHITKPKEHKKLFLVQLQEKALFAVPKNYKLVAAPLFELYDNAPGYGPIISSLPQLLSRFNFIYN</sequence>
<reference key="1">
    <citation type="journal article" date="2004" name="Genome Res.">
        <title>The status, quality, and expansion of the NIH full-length cDNA project: the Mammalian Gene Collection (MGC).</title>
        <authorList>
            <consortium name="The MGC Project Team"/>
        </authorList>
    </citation>
    <scope>NUCLEOTIDE SEQUENCE [LARGE SCALE MRNA]</scope>
    <source>
        <tissue>Spleen</tissue>
    </source>
</reference>
<dbReference type="EMBL" id="BC098748">
    <property type="protein sequence ID" value="AAH98748.1"/>
    <property type="molecule type" value="mRNA"/>
</dbReference>
<dbReference type="RefSeq" id="NP_001034093.1">
    <property type="nucleotide sequence ID" value="NM_001039004.1"/>
</dbReference>
<dbReference type="SMR" id="Q4KM65"/>
<dbReference type="BioGRID" id="253672">
    <property type="interactions" value="4"/>
</dbReference>
<dbReference type="FunCoup" id="Q4KM65">
    <property type="interactions" value="4097"/>
</dbReference>
<dbReference type="IntAct" id="Q4KM65">
    <property type="interactions" value="1"/>
</dbReference>
<dbReference type="MINT" id="Q4KM65"/>
<dbReference type="STRING" id="10116.ENSRNOP00000026297"/>
<dbReference type="iPTMnet" id="Q4KM65"/>
<dbReference type="PhosphoSitePlus" id="Q4KM65"/>
<dbReference type="jPOST" id="Q4KM65"/>
<dbReference type="PaxDb" id="10116-ENSRNOP00000026297"/>
<dbReference type="Ensembl" id="ENSRNOT00000026297.7">
    <property type="protein sequence ID" value="ENSRNOP00000026297.5"/>
    <property type="gene ID" value="ENSRNOG00000042983.3"/>
</dbReference>
<dbReference type="GeneID" id="291877"/>
<dbReference type="KEGG" id="rno:291877"/>
<dbReference type="UCSC" id="RGD:1305766">
    <property type="organism name" value="rat"/>
</dbReference>
<dbReference type="AGR" id="RGD:1305766"/>
<dbReference type="CTD" id="11051"/>
<dbReference type="RGD" id="1305766">
    <property type="gene designation" value="Nudt21"/>
</dbReference>
<dbReference type="eggNOG" id="KOG1689">
    <property type="taxonomic scope" value="Eukaryota"/>
</dbReference>
<dbReference type="GeneTree" id="ENSGT00390000015814"/>
<dbReference type="HOGENOM" id="CLU_068704_2_1_1"/>
<dbReference type="InParanoid" id="Q4KM65"/>
<dbReference type="OMA" id="NDEWEIG"/>
<dbReference type="OrthoDB" id="277288at2759"/>
<dbReference type="PhylomeDB" id="Q4KM65"/>
<dbReference type="TreeFam" id="TF106356"/>
<dbReference type="Reactome" id="R-RNO-72187">
    <property type="pathway name" value="mRNA 3'-end processing"/>
</dbReference>
<dbReference type="Reactome" id="R-RNO-72203">
    <property type="pathway name" value="Processing of Capped Intron-Containing Pre-mRNA"/>
</dbReference>
<dbReference type="Reactome" id="R-RNO-73856">
    <property type="pathway name" value="RNA Polymerase II Transcription Termination"/>
</dbReference>
<dbReference type="Reactome" id="R-RNO-77595">
    <property type="pathway name" value="Processing of Intronless Pre-mRNAs"/>
</dbReference>
<dbReference type="PRO" id="PR:Q4KM65"/>
<dbReference type="Proteomes" id="UP000002494">
    <property type="component" value="Chromosome 19"/>
</dbReference>
<dbReference type="Bgee" id="ENSRNOG00000042983">
    <property type="expression patterns" value="Expressed in thymus and 20 other cell types or tissues"/>
</dbReference>
<dbReference type="ExpressionAtlas" id="Q4KM65">
    <property type="expression patterns" value="baseline and differential"/>
</dbReference>
<dbReference type="GO" id="GO:0005737">
    <property type="term" value="C:cytoplasm"/>
    <property type="evidence" value="ECO:0000250"/>
    <property type="project" value="UniProtKB"/>
</dbReference>
<dbReference type="GO" id="GO:0005847">
    <property type="term" value="C:mRNA cleavage and polyadenylation specificity factor complex"/>
    <property type="evidence" value="ECO:0000266"/>
    <property type="project" value="RGD"/>
</dbReference>
<dbReference type="GO" id="GO:0005849">
    <property type="term" value="C:mRNA cleavage factor complex"/>
    <property type="evidence" value="ECO:0000250"/>
    <property type="project" value="UniProtKB"/>
</dbReference>
<dbReference type="GO" id="GO:0005634">
    <property type="term" value="C:nucleus"/>
    <property type="evidence" value="ECO:0000250"/>
    <property type="project" value="UniProtKB"/>
</dbReference>
<dbReference type="GO" id="GO:0042382">
    <property type="term" value="C:paraspeckles"/>
    <property type="evidence" value="ECO:0000250"/>
    <property type="project" value="UniProtKB"/>
</dbReference>
<dbReference type="GO" id="GO:0003682">
    <property type="term" value="F:chromatin binding"/>
    <property type="evidence" value="ECO:0000250"/>
    <property type="project" value="UniProtKB"/>
</dbReference>
<dbReference type="GO" id="GO:0042826">
    <property type="term" value="F:histone deacetylase binding"/>
    <property type="evidence" value="ECO:0000266"/>
    <property type="project" value="RGD"/>
</dbReference>
<dbReference type="GO" id="GO:0042802">
    <property type="term" value="F:identical protein binding"/>
    <property type="evidence" value="ECO:0000250"/>
    <property type="project" value="UniProtKB"/>
</dbReference>
<dbReference type="GO" id="GO:0035925">
    <property type="term" value="F:mRNA 3'-UTR AU-rich region binding"/>
    <property type="evidence" value="ECO:0000250"/>
    <property type="project" value="UniProtKB"/>
</dbReference>
<dbReference type="GO" id="GO:0003729">
    <property type="term" value="F:mRNA binding"/>
    <property type="evidence" value="ECO:0000250"/>
    <property type="project" value="UniProtKB"/>
</dbReference>
<dbReference type="GO" id="GO:0042803">
    <property type="term" value="F:protein homodimerization activity"/>
    <property type="evidence" value="ECO:0000266"/>
    <property type="project" value="RGD"/>
</dbReference>
<dbReference type="GO" id="GO:0030154">
    <property type="term" value="P:cell differentiation"/>
    <property type="evidence" value="ECO:0007669"/>
    <property type="project" value="UniProtKB-KW"/>
</dbReference>
<dbReference type="GO" id="GO:0180010">
    <property type="term" value="P:co-transcriptional mRNA 3'-end processing, cleavage and polyadenylation pathway"/>
    <property type="evidence" value="ECO:0000250"/>
    <property type="project" value="UniProtKB"/>
</dbReference>
<dbReference type="GO" id="GO:0031124">
    <property type="term" value="P:mRNA 3'-end processing"/>
    <property type="evidence" value="ECO:0000250"/>
    <property type="project" value="UniProtKB"/>
</dbReference>
<dbReference type="GO" id="GO:0110104">
    <property type="term" value="P:mRNA alternative polyadenylation"/>
    <property type="evidence" value="ECO:0000250"/>
    <property type="project" value="UniProtKB"/>
</dbReference>
<dbReference type="GO" id="GO:0006397">
    <property type="term" value="P:mRNA processing"/>
    <property type="evidence" value="ECO:0000250"/>
    <property type="project" value="UniProtKB"/>
</dbReference>
<dbReference type="GO" id="GO:2000975">
    <property type="term" value="P:positive regulation of pro-B cell differentiation"/>
    <property type="evidence" value="ECO:0000250"/>
    <property type="project" value="UniProtKB"/>
</dbReference>
<dbReference type="GO" id="GO:2000738">
    <property type="term" value="P:positive regulation of stem cell differentiation"/>
    <property type="evidence" value="ECO:0000250"/>
    <property type="project" value="UniProtKB"/>
</dbReference>
<dbReference type="GO" id="GO:0010608">
    <property type="term" value="P:post-transcriptional regulation of gene expression"/>
    <property type="evidence" value="ECO:0000250"/>
    <property type="project" value="UniProtKB"/>
</dbReference>
<dbReference type="GO" id="GO:0051290">
    <property type="term" value="P:protein heterotetramerization"/>
    <property type="evidence" value="ECO:0000250"/>
    <property type="project" value="UniProtKB"/>
</dbReference>
<dbReference type="GO" id="GO:0051262">
    <property type="term" value="P:protein tetramerization"/>
    <property type="evidence" value="ECO:0000266"/>
    <property type="project" value="RGD"/>
</dbReference>
<dbReference type="CDD" id="cd18871">
    <property type="entry name" value="NUDIX_Cfim25_Nudt21"/>
    <property type="match status" value="1"/>
</dbReference>
<dbReference type="FunFam" id="3.90.79.10:FF:000008">
    <property type="entry name" value="cleavage and polyadenylation specificity factor subunit 5"/>
    <property type="match status" value="1"/>
</dbReference>
<dbReference type="Gene3D" id="3.90.79.10">
    <property type="entry name" value="Nucleoside Triphosphate Pyrophosphohydrolase"/>
    <property type="match status" value="1"/>
</dbReference>
<dbReference type="InterPro" id="IPR016706">
    <property type="entry name" value="Cleav_polyA_spec_factor_su5"/>
</dbReference>
<dbReference type="InterPro" id="IPR015797">
    <property type="entry name" value="NUDIX_hydrolase-like_dom_sf"/>
</dbReference>
<dbReference type="InterPro" id="IPR000086">
    <property type="entry name" value="NUDIX_hydrolase_dom"/>
</dbReference>
<dbReference type="PANTHER" id="PTHR13047">
    <property type="entry name" value="PRE-MRNA CLEAVAGE FACTOR IM, 25KD SUBUNIT"/>
    <property type="match status" value="1"/>
</dbReference>
<dbReference type="Pfam" id="PF13869">
    <property type="entry name" value="NUDIX_2"/>
    <property type="match status" value="1"/>
</dbReference>
<dbReference type="PIRSF" id="PIRSF017888">
    <property type="entry name" value="CPSF-25"/>
    <property type="match status" value="1"/>
</dbReference>
<dbReference type="SUPFAM" id="SSF55811">
    <property type="entry name" value="Nudix"/>
    <property type="match status" value="1"/>
</dbReference>
<dbReference type="PROSITE" id="PS51462">
    <property type="entry name" value="NUDIX"/>
    <property type="match status" value="1"/>
</dbReference>
<organism>
    <name type="scientific">Rattus norvegicus</name>
    <name type="common">Rat</name>
    <dbReference type="NCBI Taxonomy" id="10116"/>
    <lineage>
        <taxon>Eukaryota</taxon>
        <taxon>Metazoa</taxon>
        <taxon>Chordata</taxon>
        <taxon>Craniata</taxon>
        <taxon>Vertebrata</taxon>
        <taxon>Euteleostomi</taxon>
        <taxon>Mammalia</taxon>
        <taxon>Eutheria</taxon>
        <taxon>Euarchontoglires</taxon>
        <taxon>Glires</taxon>
        <taxon>Rodentia</taxon>
        <taxon>Myomorpha</taxon>
        <taxon>Muroidea</taxon>
        <taxon>Muridae</taxon>
        <taxon>Murinae</taxon>
        <taxon>Rattus</taxon>
    </lineage>
</organism>
<keyword id="KW-0007">Acetylation</keyword>
<keyword id="KW-0963">Cytoplasm</keyword>
<keyword id="KW-0221">Differentiation</keyword>
<keyword id="KW-0488">Methylation</keyword>
<keyword id="KW-0507">mRNA processing</keyword>
<keyword id="KW-0539">Nucleus</keyword>
<keyword id="KW-0597">Phosphoprotein</keyword>
<keyword id="KW-1185">Reference proteome</keyword>
<keyword id="KW-0694">RNA-binding</keyword>
<accession>Q4KM65</accession>
<proteinExistence type="evidence at transcript level"/>
<feature type="initiator methionine" description="Removed" evidence="1">
    <location>
        <position position="1"/>
    </location>
</feature>
<feature type="chain" id="PRO_0000057153" description="Cleavage and polyadenylation specificity factor subunit 5">
    <location>
        <begin position="2"/>
        <end position="227"/>
    </location>
</feature>
<feature type="domain" description="Nudix hydrolase" evidence="3">
    <location>
        <begin position="76"/>
        <end position="201"/>
    </location>
</feature>
<feature type="region of interest" description="Necessary for RNA-binding" evidence="1">
    <location>
        <begin position="2"/>
        <end position="147"/>
    </location>
</feature>
<feature type="region of interest" description="Necessary for interactions with PAPOLA and PABPN1" evidence="1">
    <location>
        <begin position="81"/>
        <end position="160"/>
    </location>
</feature>
<feature type="region of interest" description="Interaction with RNA" evidence="1">
    <location>
        <begin position="102"/>
        <end position="104"/>
    </location>
</feature>
<feature type="short sequence motif" description="Nudix box">
    <location>
        <begin position="109"/>
        <end position="130"/>
    </location>
</feature>
<feature type="site" description="Interaction with RNA" evidence="1">
    <location>
        <position position="55"/>
    </location>
</feature>
<feature type="site" description="Interaction with RNA" evidence="1">
    <location>
        <position position="63"/>
    </location>
</feature>
<feature type="modified residue" description="N-acetylserine" evidence="1">
    <location>
        <position position="2"/>
    </location>
</feature>
<feature type="modified residue" description="Omega-N-methylarginine" evidence="1">
    <location>
        <position position="15"/>
    </location>
</feature>
<feature type="modified residue" description="N6-acetyllysine" evidence="1">
    <location>
        <position position="23"/>
    </location>
</feature>
<feature type="modified residue" description="N6-acetyllysine" evidence="1">
    <location>
        <position position="29"/>
    </location>
</feature>
<feature type="modified residue" description="Phosphotyrosine" evidence="1">
    <location>
        <position position="40"/>
    </location>
</feature>
<feature type="modified residue" description="N6-acetyllysine" evidence="1">
    <location>
        <position position="56"/>
    </location>
</feature>
<comment type="function">
    <text evidence="1 2">Component of the cleavage factor Im (CFIm) complex that functions as an activator of the pre-mRNA 3'-end cleavage and polyadenylation processing required for the maturation of pre-mRNA into functional mRNAs. CFIm contributes to the recruitment of multiprotein complexes on specific sequences on the pre-mRNA 3'-end, so called cleavage and polyadenylation signals (pA signals). Most pre-mRNAs contain multiple pA signals, resulting in alternative cleavage and polyadenylation (APA) producing mRNAs with variable 3'-end formation. The CFIm complex acts as a key regulator of cleavage and polyadenylation site choice during APA through its binding to 5'-UGUA-3' elements localized in the 3'-untranslated region (UTR) for a huge number of pre-mRNAs. NUDT21/CPSF5 activates indirectly the mRNA 3'-processing machinery by recruiting CPSF6 and/or CPSF7. Binds to 5'-UGUA-3' elements localized upstream of pA signals that act as enhancers of pre-mRNA 3'-end processing. The homodimer mediates simultaneous sequence-specific recognition of two 5'-UGUA-3' elements within the pre-mRNA. Plays a role in somatic cell fate transitions and pluripotency by regulating widespread changes in gene expression through an APA-dependent function. Binds to chromatin. Binds to, but does not hydrolyze mono- and di-adenosine nucleotides.</text>
</comment>
<comment type="subunit">
    <text evidence="1">Homodimer (via N- and C-terminus); binds RNA as homodimer. Component of the cleavage factor Im (CFIm) complex which is a heterotetramer composed of two subunits of NUDT21/CPSF5 and two subunits of CPSF6 or CPSF7 or a heterodimer of CPSF6 and CPSF7. The cleavage factor Im (CFIm) complex associates with the CPSF and CSTF complexes to promote the assembly of the core mRNA 3'-processing machinery. Interacts with CPSF6 (via the RRM domain); this interaction is direct and enhances binding to RNA. Interacts with CPSF7. Interacts with FIP1L1; this interaction occurs in a RNA sequence-specific manner. Interacts with PABPN1. Interacts (via N-terminus) with PAPOLA (via C-terminus); this interaction is direct and diminished by acetylation. Interacts with SNRNP70. Interacts with VIRMA.</text>
</comment>
<comment type="subcellular location">
    <subcellularLocation>
        <location evidence="1">Nucleus</location>
    </subcellularLocation>
    <subcellularLocation>
        <location evidence="1">Cytoplasm</location>
    </subcellularLocation>
    <text evidence="1">Shuttles between the nucleus and the cytoplasm in a transcription- and XPO1/CRM1-independent manner, most probably in complex with the cleavage factor Im complex (CFIm). In punctate subnuclear structures localized adjacent to nuclear speckles, called paraspeckles.</text>
</comment>
<comment type="PTM">
    <text evidence="1">Acetylated mainly by p300/CBP, recruited to the complex by CPSF6. Acetylation decreases interaction with PAPAO. Deacetylated by the class I/II HDACs, HDAC1, HDAC3 and HDAC10, and by the class III HDACs, SIRT1 and SIRT2.</text>
</comment>
<comment type="similarity">
    <text evidence="4">Belongs to the Nudix hydrolase family. CPSF5 subfamily.</text>
</comment>
<comment type="caution">
    <text evidence="4">Lacks the conserved metal-binding residues in the NUDIX motif and is not expected to have hydrolase activity.</text>
</comment>
<evidence type="ECO:0000250" key="1">
    <source>
        <dbReference type="UniProtKB" id="O43809"/>
    </source>
</evidence>
<evidence type="ECO:0000250" key="2">
    <source>
        <dbReference type="UniProtKB" id="Q9CQF3"/>
    </source>
</evidence>
<evidence type="ECO:0000255" key="3">
    <source>
        <dbReference type="PROSITE-ProRule" id="PRU00794"/>
    </source>
</evidence>
<evidence type="ECO:0000305" key="4"/>
<evidence type="ECO:0000312" key="5">
    <source>
        <dbReference type="RGD" id="1305766"/>
    </source>
</evidence>
<name>CPSF5_RAT</name>
<gene>
    <name evidence="5" type="primary">Nudt21</name>
    <name evidence="1" type="synonym">Cpsf5</name>
</gene>
<protein>
    <recommendedName>
        <fullName evidence="1">Cleavage and polyadenylation specificity factor subunit 5</fullName>
    </recommendedName>
    <alternativeName>
        <fullName>Nucleoside diphosphate-linked moiety X motif 21</fullName>
        <shortName>Nudix motif 21</shortName>
    </alternativeName>
    <alternativeName>
        <fullName evidence="4">Nudix hydrolase 21</fullName>
    </alternativeName>
</protein>